<organism>
    <name type="scientific">Vibrio cholerae serotype O1 (strain M66-2)</name>
    <dbReference type="NCBI Taxonomy" id="579112"/>
    <lineage>
        <taxon>Bacteria</taxon>
        <taxon>Pseudomonadati</taxon>
        <taxon>Pseudomonadota</taxon>
        <taxon>Gammaproteobacteria</taxon>
        <taxon>Vibrionales</taxon>
        <taxon>Vibrionaceae</taxon>
        <taxon>Vibrio</taxon>
    </lineage>
</organism>
<comment type="function">
    <text evidence="1">Responsible for synthesis of pseudouridine from uracil-13 in transfer RNAs.</text>
</comment>
<comment type="catalytic activity">
    <reaction evidence="1">
        <text>uridine(13) in tRNA = pseudouridine(13) in tRNA</text>
        <dbReference type="Rhea" id="RHEA:42540"/>
        <dbReference type="Rhea" id="RHEA-COMP:10105"/>
        <dbReference type="Rhea" id="RHEA-COMP:10106"/>
        <dbReference type="ChEBI" id="CHEBI:65314"/>
        <dbReference type="ChEBI" id="CHEBI:65315"/>
        <dbReference type="EC" id="5.4.99.27"/>
    </reaction>
</comment>
<comment type="similarity">
    <text evidence="1">Belongs to the pseudouridine synthase TruD family.</text>
</comment>
<sequence>MTDILSPLAYLCGKPTAKAKLKALPEHFQVNEVLGYSLTGHGEHLMVRIRKTGENTSFVANELAKACGVPSRAVSWAGLKDRHAVTEQWLSVHLPNGETPDFSAFLAQYPSIEILEVTRHDKKLRPGDLQGNEFVVTLSEVSDVAAVLSRLETVAELGVPNYFGSQRFGRHGNNLSEARRWGRDNVRSRNQNQRSLYLSAARSWIFNQIVSKRIEQGCFARFIEGDIALAEQQMFNVDGDLALWDQRLQAGEVAISAALAGDNALPTSGQALPLEQAELDAEPDLMALIRGNRMRHDRRAIALKAQNLSWQVQEDQITLRFSLDAGSFATSLVRELIEEIPVVRHYDQGHEQESRDSESED</sequence>
<gene>
    <name evidence="1" type="primary">truD</name>
    <name type="ordered locus">VCM66_0488</name>
</gene>
<evidence type="ECO:0000255" key="1">
    <source>
        <dbReference type="HAMAP-Rule" id="MF_01082"/>
    </source>
</evidence>
<name>TRUD_VIBCM</name>
<reference key="1">
    <citation type="journal article" date="2008" name="PLoS ONE">
        <title>A recalibrated molecular clock and independent origins for the cholera pandemic clones.</title>
        <authorList>
            <person name="Feng L."/>
            <person name="Reeves P.R."/>
            <person name="Lan R."/>
            <person name="Ren Y."/>
            <person name="Gao C."/>
            <person name="Zhou Z."/>
            <person name="Ren Y."/>
            <person name="Cheng J."/>
            <person name="Wang W."/>
            <person name="Wang J."/>
            <person name="Qian W."/>
            <person name="Li D."/>
            <person name="Wang L."/>
        </authorList>
    </citation>
    <scope>NUCLEOTIDE SEQUENCE [LARGE SCALE GENOMIC DNA]</scope>
    <source>
        <strain>M66-2</strain>
    </source>
</reference>
<dbReference type="EC" id="5.4.99.27" evidence="1"/>
<dbReference type="EMBL" id="CP001233">
    <property type="protein sequence ID" value="ACP04813.1"/>
    <property type="molecule type" value="Genomic_DNA"/>
</dbReference>
<dbReference type="RefSeq" id="WP_000129752.1">
    <property type="nucleotide sequence ID" value="NC_012578.1"/>
</dbReference>
<dbReference type="SMR" id="C3LS20"/>
<dbReference type="KEGG" id="vcm:VCM66_0488"/>
<dbReference type="HOGENOM" id="CLU_005281_4_0_6"/>
<dbReference type="Proteomes" id="UP000001217">
    <property type="component" value="Chromosome I"/>
</dbReference>
<dbReference type="GO" id="GO:0005829">
    <property type="term" value="C:cytosol"/>
    <property type="evidence" value="ECO:0007669"/>
    <property type="project" value="TreeGrafter"/>
</dbReference>
<dbReference type="GO" id="GO:0003723">
    <property type="term" value="F:RNA binding"/>
    <property type="evidence" value="ECO:0007669"/>
    <property type="project" value="InterPro"/>
</dbReference>
<dbReference type="GO" id="GO:0160150">
    <property type="term" value="F:tRNA pseudouridine(13) synthase activity"/>
    <property type="evidence" value="ECO:0007669"/>
    <property type="project" value="UniProtKB-EC"/>
</dbReference>
<dbReference type="GO" id="GO:0031119">
    <property type="term" value="P:tRNA pseudouridine synthesis"/>
    <property type="evidence" value="ECO:0007669"/>
    <property type="project" value="UniProtKB-UniRule"/>
</dbReference>
<dbReference type="CDD" id="cd02575">
    <property type="entry name" value="PseudoU_synth_EcTruD"/>
    <property type="match status" value="1"/>
</dbReference>
<dbReference type="Gene3D" id="3.30.2350.20">
    <property type="entry name" value="TruD, catalytic domain"/>
    <property type="match status" value="1"/>
</dbReference>
<dbReference type="Gene3D" id="3.30.2340.10">
    <property type="entry name" value="TruD, insertion domain"/>
    <property type="match status" value="1"/>
</dbReference>
<dbReference type="HAMAP" id="MF_01082">
    <property type="entry name" value="TruD"/>
    <property type="match status" value="1"/>
</dbReference>
<dbReference type="InterPro" id="IPR020103">
    <property type="entry name" value="PsdUridine_synth_cat_dom_sf"/>
</dbReference>
<dbReference type="InterPro" id="IPR001656">
    <property type="entry name" value="PsdUridine_synth_TruD"/>
</dbReference>
<dbReference type="InterPro" id="IPR020119">
    <property type="entry name" value="PsdUridine_synth_TruD_CS"/>
</dbReference>
<dbReference type="InterPro" id="IPR011760">
    <property type="entry name" value="PsdUridine_synth_TruD_insert"/>
</dbReference>
<dbReference type="InterPro" id="IPR042214">
    <property type="entry name" value="TruD_catalytic"/>
</dbReference>
<dbReference type="InterPro" id="IPR043165">
    <property type="entry name" value="TruD_insert_sf"/>
</dbReference>
<dbReference type="InterPro" id="IPR050170">
    <property type="entry name" value="TruD_pseudoU_synthase"/>
</dbReference>
<dbReference type="NCBIfam" id="NF002155">
    <property type="entry name" value="PRK00984.1-4"/>
    <property type="match status" value="1"/>
</dbReference>
<dbReference type="PANTHER" id="PTHR47811">
    <property type="entry name" value="TRNA PSEUDOURIDINE SYNTHASE D"/>
    <property type="match status" value="1"/>
</dbReference>
<dbReference type="PANTHER" id="PTHR47811:SF1">
    <property type="entry name" value="TRNA PSEUDOURIDINE SYNTHASE D"/>
    <property type="match status" value="1"/>
</dbReference>
<dbReference type="Pfam" id="PF01142">
    <property type="entry name" value="TruD"/>
    <property type="match status" value="2"/>
</dbReference>
<dbReference type="SUPFAM" id="SSF55120">
    <property type="entry name" value="Pseudouridine synthase"/>
    <property type="match status" value="1"/>
</dbReference>
<dbReference type="PROSITE" id="PS50984">
    <property type="entry name" value="TRUD"/>
    <property type="match status" value="1"/>
</dbReference>
<dbReference type="PROSITE" id="PS01268">
    <property type="entry name" value="UPF0024"/>
    <property type="match status" value="1"/>
</dbReference>
<protein>
    <recommendedName>
        <fullName evidence="1">tRNA pseudouridine synthase D</fullName>
        <ecNumber evidence="1">5.4.99.27</ecNumber>
    </recommendedName>
    <alternativeName>
        <fullName evidence="1">tRNA pseudouridine(13) synthase</fullName>
    </alternativeName>
    <alternativeName>
        <fullName evidence="1">tRNA pseudouridylate synthase D</fullName>
    </alternativeName>
    <alternativeName>
        <fullName evidence="1">tRNA-uridine isomerase D</fullName>
    </alternativeName>
</protein>
<accession>C3LS20</accession>
<keyword id="KW-0413">Isomerase</keyword>
<keyword id="KW-0819">tRNA processing</keyword>
<feature type="chain" id="PRO_1000149849" description="tRNA pseudouridine synthase D">
    <location>
        <begin position="1"/>
        <end position="361"/>
    </location>
</feature>
<feature type="domain" description="TRUD" evidence="1">
    <location>
        <begin position="158"/>
        <end position="303"/>
    </location>
</feature>
<feature type="active site" description="Nucleophile" evidence="1">
    <location>
        <position position="81"/>
    </location>
</feature>
<proteinExistence type="inferred from homology"/>